<sequence>MRLPIFLDTDPGIDDAVAIAAAIFTPELDLQLMTTVAGNVSVEKTTRNALQLLHFWNVDIPLAQGAAVPLVRAPRDAASVHGESGMAGYDFVEHNRKPLGIPAFLAIRDALMRAPEPVTLVAIGPLTNIALLLSQCPECKPYIRRLVIMGGSAGRGNCTPNAEFNIAADPEAASCVFRSGIEIVMCGLDVTNQAILTPDYLATLPELNRTGKMLHALFSHYRSGSMQSGLRMHDLCAIAWLVRPELFTLKPCFVAVETQGEFTSGTTVVDIDGCLGKPANVKVALDLNVKGFQQWVAEVLALVP</sequence>
<name>RIHC_ECO27</name>
<accession>B7UI75</accession>
<proteinExistence type="inferred from homology"/>
<gene>
    <name evidence="1" type="primary">rihC</name>
    <name type="ordered locus">E2348C_0030</name>
</gene>
<reference key="1">
    <citation type="journal article" date="2009" name="J. Bacteriol.">
        <title>Complete genome sequence and comparative genome analysis of enteropathogenic Escherichia coli O127:H6 strain E2348/69.</title>
        <authorList>
            <person name="Iguchi A."/>
            <person name="Thomson N.R."/>
            <person name="Ogura Y."/>
            <person name="Saunders D."/>
            <person name="Ooka T."/>
            <person name="Henderson I.R."/>
            <person name="Harris D."/>
            <person name="Asadulghani M."/>
            <person name="Kurokawa K."/>
            <person name="Dean P."/>
            <person name="Kenny B."/>
            <person name="Quail M.A."/>
            <person name="Thurston S."/>
            <person name="Dougan G."/>
            <person name="Hayashi T."/>
            <person name="Parkhill J."/>
            <person name="Frankel G."/>
        </authorList>
    </citation>
    <scope>NUCLEOTIDE SEQUENCE [LARGE SCALE GENOMIC DNA]</scope>
    <source>
        <strain>E2348/69 / EPEC</strain>
    </source>
</reference>
<keyword id="KW-0326">Glycosidase</keyword>
<keyword id="KW-0378">Hydrolase</keyword>
<keyword id="KW-1185">Reference proteome</keyword>
<evidence type="ECO:0000255" key="1">
    <source>
        <dbReference type="HAMAP-Rule" id="MF_01432"/>
    </source>
</evidence>
<feature type="chain" id="PRO_1000184896" description="Non-specific ribonucleoside hydrolase RihC">
    <location>
        <begin position="1"/>
        <end position="304"/>
    </location>
</feature>
<feature type="active site" evidence="1">
    <location>
        <position position="233"/>
    </location>
</feature>
<organism>
    <name type="scientific">Escherichia coli O127:H6 (strain E2348/69 / EPEC)</name>
    <dbReference type="NCBI Taxonomy" id="574521"/>
    <lineage>
        <taxon>Bacteria</taxon>
        <taxon>Pseudomonadati</taxon>
        <taxon>Pseudomonadota</taxon>
        <taxon>Gammaproteobacteria</taxon>
        <taxon>Enterobacterales</taxon>
        <taxon>Enterobacteriaceae</taxon>
        <taxon>Escherichia</taxon>
    </lineage>
</organism>
<dbReference type="EC" id="3.2.-.-" evidence="1"/>
<dbReference type="EMBL" id="FM180568">
    <property type="protein sequence ID" value="CAS07578.1"/>
    <property type="molecule type" value="Genomic_DNA"/>
</dbReference>
<dbReference type="RefSeq" id="WP_001239170.1">
    <property type="nucleotide sequence ID" value="NC_011601.1"/>
</dbReference>
<dbReference type="SMR" id="B7UI75"/>
<dbReference type="KEGG" id="ecg:E2348C_0030"/>
<dbReference type="HOGENOM" id="CLU_036838_2_2_6"/>
<dbReference type="Proteomes" id="UP000008205">
    <property type="component" value="Chromosome"/>
</dbReference>
<dbReference type="GO" id="GO:0005829">
    <property type="term" value="C:cytosol"/>
    <property type="evidence" value="ECO:0007669"/>
    <property type="project" value="TreeGrafter"/>
</dbReference>
<dbReference type="GO" id="GO:0008477">
    <property type="term" value="F:purine nucleosidase activity"/>
    <property type="evidence" value="ECO:0007669"/>
    <property type="project" value="TreeGrafter"/>
</dbReference>
<dbReference type="GO" id="GO:0045437">
    <property type="term" value="F:uridine nucleosidase activity"/>
    <property type="evidence" value="ECO:0007669"/>
    <property type="project" value="UniProtKB-ARBA"/>
</dbReference>
<dbReference type="GO" id="GO:0006144">
    <property type="term" value="P:purine nucleobase metabolic process"/>
    <property type="evidence" value="ECO:0007669"/>
    <property type="project" value="UniProtKB-UniRule"/>
</dbReference>
<dbReference type="GO" id="GO:0006152">
    <property type="term" value="P:purine nucleoside catabolic process"/>
    <property type="evidence" value="ECO:0007669"/>
    <property type="project" value="TreeGrafter"/>
</dbReference>
<dbReference type="GO" id="GO:0006206">
    <property type="term" value="P:pyrimidine nucleobase metabolic process"/>
    <property type="evidence" value="ECO:0007669"/>
    <property type="project" value="UniProtKB-UniRule"/>
</dbReference>
<dbReference type="CDD" id="cd02651">
    <property type="entry name" value="nuc_hydro_IU_UC_XIUA"/>
    <property type="match status" value="1"/>
</dbReference>
<dbReference type="FunFam" id="3.90.245.10:FF:000002">
    <property type="entry name" value="Non-specific ribonucleoside hydrolase RihC"/>
    <property type="match status" value="1"/>
</dbReference>
<dbReference type="Gene3D" id="3.90.245.10">
    <property type="entry name" value="Ribonucleoside hydrolase-like"/>
    <property type="match status" value="1"/>
</dbReference>
<dbReference type="HAMAP" id="MF_01432">
    <property type="entry name" value="Nucleosid_hydro_RihC"/>
    <property type="match status" value="1"/>
</dbReference>
<dbReference type="InterPro" id="IPR015910">
    <property type="entry name" value="I/U_nuclsd_hydro_CS"/>
</dbReference>
<dbReference type="InterPro" id="IPR001910">
    <property type="entry name" value="Inosine/uridine_hydrolase_dom"/>
</dbReference>
<dbReference type="InterPro" id="IPR023186">
    <property type="entry name" value="IUNH"/>
</dbReference>
<dbReference type="InterPro" id="IPR022976">
    <property type="entry name" value="Nucleosid_hydro_RihC_nonspecif"/>
</dbReference>
<dbReference type="InterPro" id="IPR036452">
    <property type="entry name" value="Ribo_hydro-like"/>
</dbReference>
<dbReference type="NCBIfam" id="NF008036">
    <property type="entry name" value="PRK10768.1"/>
    <property type="match status" value="1"/>
</dbReference>
<dbReference type="PANTHER" id="PTHR12304">
    <property type="entry name" value="INOSINE-URIDINE PREFERRING NUCLEOSIDE HYDROLASE"/>
    <property type="match status" value="1"/>
</dbReference>
<dbReference type="PANTHER" id="PTHR12304:SF15">
    <property type="entry name" value="NON-SPECIFIC RIBONUCLEOSIDE HYDROLASE RIHC"/>
    <property type="match status" value="1"/>
</dbReference>
<dbReference type="Pfam" id="PF01156">
    <property type="entry name" value="IU_nuc_hydro"/>
    <property type="match status" value="1"/>
</dbReference>
<dbReference type="SUPFAM" id="SSF53590">
    <property type="entry name" value="Nucleoside hydrolase"/>
    <property type="match status" value="1"/>
</dbReference>
<dbReference type="PROSITE" id="PS01247">
    <property type="entry name" value="IUNH"/>
    <property type="match status" value="1"/>
</dbReference>
<comment type="function">
    <text evidence="1">Hydrolyzes both purine and pyrimidine ribonucleosides with a broad-substrate specificity.</text>
</comment>
<comment type="similarity">
    <text evidence="1">Belongs to the IUNH family. RihC subfamily.</text>
</comment>
<protein>
    <recommendedName>
        <fullName evidence="1">Non-specific ribonucleoside hydrolase RihC</fullName>
        <ecNumber evidence="1">3.2.-.-</ecNumber>
    </recommendedName>
    <alternativeName>
        <fullName evidence="1">Purine/pyrimidine ribonucleoside hydrolase</fullName>
    </alternativeName>
</protein>